<feature type="chain" id="PRO_1000116996" description="Translation initiation factor 6">
    <location>
        <begin position="1"/>
        <end position="221"/>
    </location>
</feature>
<dbReference type="EMBL" id="CP001365">
    <property type="protein sequence ID" value="ACM56425.1"/>
    <property type="molecule type" value="Genomic_DNA"/>
</dbReference>
<dbReference type="RefSeq" id="WP_015909577.1">
    <property type="nucleotide sequence ID" value="NC_012029.1"/>
</dbReference>
<dbReference type="SMR" id="B9LUU8"/>
<dbReference type="GeneID" id="7400792"/>
<dbReference type="KEGG" id="hla:Hlac_0826"/>
<dbReference type="eggNOG" id="arCOG04176">
    <property type="taxonomic scope" value="Archaea"/>
</dbReference>
<dbReference type="HOGENOM" id="CLU_071894_1_0_2"/>
<dbReference type="Proteomes" id="UP000000740">
    <property type="component" value="Chromosome 1"/>
</dbReference>
<dbReference type="GO" id="GO:0043022">
    <property type="term" value="F:ribosome binding"/>
    <property type="evidence" value="ECO:0007669"/>
    <property type="project" value="InterPro"/>
</dbReference>
<dbReference type="GO" id="GO:0003743">
    <property type="term" value="F:translation initiation factor activity"/>
    <property type="evidence" value="ECO:0007669"/>
    <property type="project" value="UniProtKB-UniRule"/>
</dbReference>
<dbReference type="GO" id="GO:0042256">
    <property type="term" value="P:cytosolic ribosome assembly"/>
    <property type="evidence" value="ECO:0007669"/>
    <property type="project" value="InterPro"/>
</dbReference>
<dbReference type="Gene3D" id="3.75.10.10">
    <property type="entry name" value="L-arginine/glycine Amidinotransferase, Chain A"/>
    <property type="match status" value="1"/>
</dbReference>
<dbReference type="HAMAP" id="MF_00032">
    <property type="entry name" value="eIF_6"/>
    <property type="match status" value="1"/>
</dbReference>
<dbReference type="InterPro" id="IPR002769">
    <property type="entry name" value="eIF6"/>
</dbReference>
<dbReference type="NCBIfam" id="TIGR00323">
    <property type="entry name" value="eIF-6"/>
    <property type="match status" value="1"/>
</dbReference>
<dbReference type="NCBIfam" id="NF003128">
    <property type="entry name" value="PRK04046.1-4"/>
    <property type="match status" value="1"/>
</dbReference>
<dbReference type="PANTHER" id="PTHR10784">
    <property type="entry name" value="TRANSLATION INITIATION FACTOR 6"/>
    <property type="match status" value="1"/>
</dbReference>
<dbReference type="Pfam" id="PF01912">
    <property type="entry name" value="eIF-6"/>
    <property type="match status" value="1"/>
</dbReference>
<dbReference type="PIRSF" id="PIRSF006413">
    <property type="entry name" value="IF-6"/>
    <property type="match status" value="1"/>
</dbReference>
<dbReference type="SMART" id="SM00654">
    <property type="entry name" value="eIF6"/>
    <property type="match status" value="1"/>
</dbReference>
<dbReference type="SUPFAM" id="SSF55909">
    <property type="entry name" value="Pentein"/>
    <property type="match status" value="1"/>
</dbReference>
<accession>B9LUU8</accession>
<gene>
    <name evidence="1" type="primary">eif6</name>
    <name type="ordered locus">Hlac_0826</name>
</gene>
<keyword id="KW-0396">Initiation factor</keyword>
<keyword id="KW-0648">Protein biosynthesis</keyword>
<keyword id="KW-1185">Reference proteome</keyword>
<evidence type="ECO:0000255" key="1">
    <source>
        <dbReference type="HAMAP-Rule" id="MF_00032"/>
    </source>
</evidence>
<protein>
    <recommendedName>
        <fullName evidence="1">Translation initiation factor 6</fullName>
        <shortName evidence="1">aIF-6</shortName>
    </recommendedName>
</protein>
<sequence length="221" mass="22890">MLRATFTGSSYVGVFARAIDDLLLVRPDVDEELADALGEELGAEPLLTTVGGANTVGSLATGNENGVLVSARATEREQSRIAEAADCEVGELPGEINAAGNVVLANDYGAYVHPDLPRESIVTIRETLGVPVVRGDLGDVRTVGTAAVANNTGVLCHPKSTESELQAVEEALDVRADLGTINYGAPLIGSGLIATDEGYVVGEDTTGPELGRIEETLGFID</sequence>
<organism>
    <name type="scientific">Halorubrum lacusprofundi (strain ATCC 49239 / DSM 5036 / JCM 8891 / ACAM 34)</name>
    <dbReference type="NCBI Taxonomy" id="416348"/>
    <lineage>
        <taxon>Archaea</taxon>
        <taxon>Methanobacteriati</taxon>
        <taxon>Methanobacteriota</taxon>
        <taxon>Stenosarchaea group</taxon>
        <taxon>Halobacteria</taxon>
        <taxon>Halobacteriales</taxon>
        <taxon>Haloferacaceae</taxon>
        <taxon>Halorubrum</taxon>
    </lineage>
</organism>
<reference key="1">
    <citation type="journal article" date="2016" name="Stand. Genomic Sci.">
        <title>Complete genome sequence of the Antarctic Halorubrum lacusprofundi type strain ACAM 34.</title>
        <authorList>
            <person name="Anderson I.J."/>
            <person name="DasSarma P."/>
            <person name="Lucas S."/>
            <person name="Copeland A."/>
            <person name="Lapidus A."/>
            <person name="Del Rio T.G."/>
            <person name="Tice H."/>
            <person name="Dalin E."/>
            <person name="Bruce D.C."/>
            <person name="Goodwin L."/>
            <person name="Pitluck S."/>
            <person name="Sims D."/>
            <person name="Brettin T.S."/>
            <person name="Detter J.C."/>
            <person name="Han C.S."/>
            <person name="Larimer F."/>
            <person name="Hauser L."/>
            <person name="Land M."/>
            <person name="Ivanova N."/>
            <person name="Richardson P."/>
            <person name="Cavicchioli R."/>
            <person name="DasSarma S."/>
            <person name="Woese C.R."/>
            <person name="Kyrpides N.C."/>
        </authorList>
    </citation>
    <scope>NUCLEOTIDE SEQUENCE [LARGE SCALE GENOMIC DNA]</scope>
    <source>
        <strain>ATCC 49239 / DSM 5036 / JCM 8891 / ACAM 34</strain>
    </source>
</reference>
<proteinExistence type="inferred from homology"/>
<name>IF6_HALLT</name>
<comment type="function">
    <text evidence="1">Binds to the 50S ribosomal subunit and prevents its association with the 30S ribosomal subunit to form the 70S initiation complex.</text>
</comment>
<comment type="similarity">
    <text evidence="1">Belongs to the eIF-6 family.</text>
</comment>